<dbReference type="EC" id="2.5.1.-" evidence="3"/>
<dbReference type="EC" id="2.5.1.1" evidence="3"/>
<dbReference type="EC" id="2.5.1.29" evidence="3"/>
<dbReference type="EC" id="2.5.1.10" evidence="3"/>
<dbReference type="EMBL" id="MK946440">
    <property type="protein sequence ID" value="QIG55792.1"/>
    <property type="molecule type" value="mRNA"/>
</dbReference>
<dbReference type="SMR" id="A0A858E6N7"/>
<dbReference type="GO" id="GO:0016829">
    <property type="term" value="F:lyase activity"/>
    <property type="evidence" value="ECO:0007669"/>
    <property type="project" value="UniProtKB-KW"/>
</dbReference>
<dbReference type="GO" id="GO:0046872">
    <property type="term" value="F:metal ion binding"/>
    <property type="evidence" value="ECO:0007669"/>
    <property type="project" value="UniProtKB-KW"/>
</dbReference>
<dbReference type="GO" id="GO:0004659">
    <property type="term" value="F:prenyltransferase activity"/>
    <property type="evidence" value="ECO:0007669"/>
    <property type="project" value="InterPro"/>
</dbReference>
<dbReference type="GO" id="GO:0008299">
    <property type="term" value="P:isoprenoid biosynthetic process"/>
    <property type="evidence" value="ECO:0007669"/>
    <property type="project" value="UniProtKB-KW"/>
</dbReference>
<dbReference type="CDD" id="cd00685">
    <property type="entry name" value="Trans_IPPS_HT"/>
    <property type="match status" value="1"/>
</dbReference>
<dbReference type="Gene3D" id="1.10.600.10">
    <property type="entry name" value="Farnesyl Diphosphate Synthase"/>
    <property type="match status" value="1"/>
</dbReference>
<dbReference type="InterPro" id="IPR008949">
    <property type="entry name" value="Isoprenoid_synthase_dom_sf"/>
</dbReference>
<dbReference type="InterPro" id="IPR000092">
    <property type="entry name" value="Polyprenyl_synt"/>
</dbReference>
<dbReference type="InterPro" id="IPR033749">
    <property type="entry name" value="Polyprenyl_synt_CS"/>
</dbReference>
<dbReference type="PANTHER" id="PTHR12001">
    <property type="entry name" value="GERANYLGERANYL PYROPHOSPHATE SYNTHASE"/>
    <property type="match status" value="1"/>
</dbReference>
<dbReference type="PANTHER" id="PTHR12001:SF44">
    <property type="entry name" value="GERANYLGERANYL PYROPHOSPHATE SYNTHASE"/>
    <property type="match status" value="1"/>
</dbReference>
<dbReference type="Pfam" id="PF00348">
    <property type="entry name" value="polyprenyl_synt"/>
    <property type="match status" value="1"/>
</dbReference>
<dbReference type="SFLD" id="SFLDS00005">
    <property type="entry name" value="Isoprenoid_Synthase_Type_I"/>
    <property type="match status" value="1"/>
</dbReference>
<dbReference type="SUPFAM" id="SSF48576">
    <property type="entry name" value="Terpenoid synthases"/>
    <property type="match status" value="1"/>
</dbReference>
<dbReference type="PROSITE" id="PS00723">
    <property type="entry name" value="POLYPRENYL_SYNTHASE_1"/>
    <property type="match status" value="1"/>
</dbReference>
<dbReference type="PROSITE" id="PS00444">
    <property type="entry name" value="POLYPRENYL_SYNTHASE_2"/>
    <property type="match status" value="1"/>
</dbReference>
<feature type="chain" id="PRO_0000457151" description="Geranylgeranyl pyrophosphate synthase">
    <location>
        <begin position="1"/>
        <end position="365"/>
    </location>
</feature>
<feature type="region of interest" description="Disordered" evidence="2">
    <location>
        <begin position="1"/>
        <end position="36"/>
    </location>
</feature>
<feature type="compositionally biased region" description="Polar residues" evidence="2">
    <location>
        <begin position="1"/>
        <end position="11"/>
    </location>
</feature>
<feature type="compositionally biased region" description="Low complexity" evidence="2">
    <location>
        <begin position="21"/>
        <end position="34"/>
    </location>
</feature>
<feature type="binding site" evidence="1">
    <location>
        <position position="78"/>
    </location>
    <ligand>
        <name>isopentenyl diphosphate</name>
        <dbReference type="ChEBI" id="CHEBI:128769"/>
    </ligand>
</feature>
<feature type="binding site" evidence="1">
    <location>
        <position position="81"/>
    </location>
    <ligand>
        <name>isopentenyl diphosphate</name>
        <dbReference type="ChEBI" id="CHEBI:128769"/>
    </ligand>
</feature>
<feature type="binding site" evidence="1">
    <location>
        <position position="110"/>
    </location>
    <ligand>
        <name>isopentenyl diphosphate</name>
        <dbReference type="ChEBI" id="CHEBI:128769"/>
    </ligand>
</feature>
<feature type="binding site" evidence="1">
    <location>
        <position position="117"/>
    </location>
    <ligand>
        <name>Mg(2+)</name>
        <dbReference type="ChEBI" id="CHEBI:18420"/>
        <label>1</label>
    </ligand>
</feature>
<feature type="binding site" evidence="1">
    <location>
        <position position="117"/>
    </location>
    <ligand>
        <name>Mg(2+)</name>
        <dbReference type="ChEBI" id="CHEBI:18420"/>
        <label>2</label>
    </ligand>
</feature>
<feature type="binding site" evidence="1">
    <location>
        <position position="121"/>
    </location>
    <ligand>
        <name>Mg(2+)</name>
        <dbReference type="ChEBI" id="CHEBI:18420"/>
        <label>1</label>
    </ligand>
</feature>
<feature type="binding site" evidence="1">
    <location>
        <position position="121"/>
    </location>
    <ligand>
        <name>Mg(2+)</name>
        <dbReference type="ChEBI" id="CHEBI:18420"/>
        <label>2</label>
    </ligand>
</feature>
<feature type="binding site" evidence="1">
    <location>
        <position position="126"/>
    </location>
    <ligand>
        <name>dimethylallyl diphosphate</name>
        <dbReference type="ChEBI" id="CHEBI:57623"/>
    </ligand>
</feature>
<feature type="binding site" evidence="1">
    <location>
        <position position="127"/>
    </location>
    <ligand>
        <name>isopentenyl diphosphate</name>
        <dbReference type="ChEBI" id="CHEBI:128769"/>
    </ligand>
</feature>
<feature type="binding site" evidence="1">
    <location>
        <position position="211"/>
    </location>
    <ligand>
        <name>dimethylallyl diphosphate</name>
        <dbReference type="ChEBI" id="CHEBI:57623"/>
    </ligand>
</feature>
<feature type="binding site" evidence="1">
    <location>
        <position position="212"/>
    </location>
    <ligand>
        <name>dimethylallyl diphosphate</name>
        <dbReference type="ChEBI" id="CHEBI:57623"/>
    </ligand>
</feature>
<feature type="binding site" evidence="1">
    <location>
        <position position="247"/>
    </location>
    <ligand>
        <name>dimethylallyl diphosphate</name>
        <dbReference type="ChEBI" id="CHEBI:57623"/>
    </ligand>
</feature>
<feature type="binding site" evidence="1">
    <location>
        <position position="250"/>
    </location>
    <ligand>
        <name>Mg(2+)</name>
        <dbReference type="ChEBI" id="CHEBI:18420"/>
        <label>3</label>
    </ligand>
</feature>
<feature type="binding site" evidence="1">
    <location>
        <position position="254"/>
    </location>
    <ligand>
        <name>dimethylallyl diphosphate</name>
        <dbReference type="ChEBI" id="CHEBI:57623"/>
    </ligand>
</feature>
<feature type="binding site" evidence="1">
    <location>
        <position position="263"/>
    </location>
    <ligand>
        <name>dimethylallyl diphosphate</name>
        <dbReference type="ChEBI" id="CHEBI:57623"/>
    </ligand>
</feature>
<feature type="binding site" evidence="1">
    <location>
        <position position="273"/>
    </location>
    <ligand>
        <name>dimethylallyl diphosphate</name>
        <dbReference type="ChEBI" id="CHEBI:57623"/>
    </ligand>
</feature>
<feature type="site" description="Important for determining product chain length" evidence="1">
    <location>
        <position position="149"/>
    </location>
</feature>
<feature type="mutagenesis site" description="Leads a complete loss of GGDPS activity but enables the production of (E)-nerolidol." evidence="3">
    <original>R</original>
    <variation>P</variation>
    <location>
        <position position="81"/>
    </location>
</feature>
<feature type="mutagenesis site" description="Leads a reduced GGDPS activity to about 40%; when associated with S-254." evidence="3">
    <original>D</original>
    <variation>N</variation>
    <location>
        <position position="250"/>
    </location>
</feature>
<feature type="mutagenesis site" description="Leads a reduced GGDPS activity to about 40%; when associated with N-250." evidence="3">
    <original>N</original>
    <variation>S</variation>
    <location>
        <position position="254"/>
    </location>
</feature>
<sequence length="365" mass="41213">MKPLPSTNGKVNGNGKHHDSSLSSTSSTSSSSSSDTQFNISDRYGDFLHRLDTLDTWPKSNEQILLEPYTYLNNIPGKEIRSMMIDAFNHWLQIPRPALEIIKKIVGQLHTASLLMDDVEDDSDLRRGVPVTHKIYGIPQTINTANYVYFLAYQELSKLKPCLSSNASTDLWSLVNDELLQLHRGQGMDLYWRDSLTCPTEEEYLQMVNNKTGGLFRIAIKLMIALSPLTETPDYLPLVNLVGIIFQIRDDLLNLSSVYTKNKGFCEDLTEGKFSFPIVHSIRADSSNHQLMNILRQKPTDIGTKTFAVSYMKDQTKSLQYTREVLTCLEEQAIEEVTRLGGNPALESIFELMHVLPSPPATDQH</sequence>
<organism>
    <name type="scientific">Melampsora lini</name>
    <name type="common">Rust fungus</name>
    <dbReference type="NCBI Taxonomy" id="5261"/>
    <lineage>
        <taxon>Eukaryota</taxon>
        <taxon>Fungi</taxon>
        <taxon>Dikarya</taxon>
        <taxon>Basidiomycota</taxon>
        <taxon>Pucciniomycotina</taxon>
        <taxon>Pucciniomycetes</taxon>
        <taxon>Pucciniales</taxon>
        <taxon>Melampsoraceae</taxon>
        <taxon>Melampsora</taxon>
    </lineage>
</organism>
<evidence type="ECO:0000250" key="1">
    <source>
        <dbReference type="UniProtKB" id="Q12051"/>
    </source>
</evidence>
<evidence type="ECO:0000256" key="2">
    <source>
        <dbReference type="SAM" id="MobiDB-lite"/>
    </source>
</evidence>
<evidence type="ECO:0000269" key="3">
    <source>
    </source>
</evidence>
<evidence type="ECO:0000303" key="4">
    <source>
    </source>
</evidence>
<evidence type="ECO:0000305" key="5"/>
<keyword id="KW-0414">Isoprene biosynthesis</keyword>
<keyword id="KW-0456">Lyase</keyword>
<keyword id="KW-0460">Magnesium</keyword>
<keyword id="KW-0479">Metal-binding</keyword>
<keyword id="KW-0511">Multifunctional enzyme</keyword>
<keyword id="KW-0808">Transferase</keyword>
<reference key="1">
    <citation type="journal article" date="2020" name="Sci. Rep.">
        <title>Evolution of isoprenyl diphosphate synthase-like terpene synthases in fungi.</title>
        <authorList>
            <person name="Wei G."/>
            <person name="Eberl F."/>
            <person name="Chen X."/>
            <person name="Zhang C."/>
            <person name="Unsicker S.B."/>
            <person name="Koellner T.G."/>
            <person name="Gershenzon J."/>
            <person name="Chen F."/>
        </authorList>
    </citation>
    <scope>NUCLEOTIDE SEQUENCE [MRNA]</scope>
    <scope>FUNCTION</scope>
    <scope>CATALYTIC ACTIVITY</scope>
    <scope>MUTAGENESIS OF ARG-81; ASP-250 AND ASN-254</scope>
</reference>
<protein>
    <recommendedName>
        <fullName evidence="4">Geranylgeranyl pyrophosphate synthase</fullName>
        <shortName evidence="4">GGPP synthase</shortName>
        <shortName evidence="4">GGPPSase</shortName>
        <ecNumber evidence="3">2.5.1.-</ecNumber>
    </recommendedName>
    <alternativeName>
        <fullName evidence="4">(2E,6E)-farnesyl diphosphate synthase</fullName>
    </alternativeName>
    <alternativeName>
        <fullName evidence="4">Dimethylallyltranstransferase</fullName>
        <ecNumber evidence="3">2.5.1.1</ecNumber>
    </alternativeName>
    <alternativeName>
        <fullName evidence="4">Farnesyl diphosphate synthase</fullName>
    </alternativeName>
    <alternativeName>
        <fullName evidence="4">Farnesyltranstransferase</fullName>
        <ecNumber evidence="3">2.5.1.29</ecNumber>
    </alternativeName>
    <alternativeName>
        <fullName evidence="4">Geranylgeranyl diphosphate synthase</fullName>
    </alternativeName>
    <alternativeName>
        <fullName evidence="4">Geranyltranstransferase</fullName>
        <ecNumber evidence="3">2.5.1.10</ecNumber>
    </alternativeName>
</protein>
<comment type="function">
    <text evidence="3">Geranylgeranyl pyrophosphate synthase that catalyzes the trans-addition of the three molecules of IPP onto DMAPP to form geranylgeranyl pyrophosphate (PubMed:32913319). Does not show any monoterpene nor sesquiterpene synthase activity (PubMed:32913319).</text>
</comment>
<comment type="catalytic activity">
    <reaction evidence="3">
        <text>isopentenyl diphosphate + dimethylallyl diphosphate = (2E)-geranyl diphosphate + diphosphate</text>
        <dbReference type="Rhea" id="RHEA:22408"/>
        <dbReference type="ChEBI" id="CHEBI:33019"/>
        <dbReference type="ChEBI" id="CHEBI:57623"/>
        <dbReference type="ChEBI" id="CHEBI:58057"/>
        <dbReference type="ChEBI" id="CHEBI:128769"/>
        <dbReference type="EC" id="2.5.1.1"/>
    </reaction>
    <physiologicalReaction direction="left-to-right" evidence="3">
        <dbReference type="Rhea" id="RHEA:22409"/>
    </physiologicalReaction>
</comment>
<comment type="catalytic activity">
    <reaction evidence="3">
        <text>isopentenyl diphosphate + (2E)-geranyl diphosphate = (2E,6E)-farnesyl diphosphate + diphosphate</text>
        <dbReference type="Rhea" id="RHEA:19361"/>
        <dbReference type="ChEBI" id="CHEBI:33019"/>
        <dbReference type="ChEBI" id="CHEBI:58057"/>
        <dbReference type="ChEBI" id="CHEBI:128769"/>
        <dbReference type="ChEBI" id="CHEBI:175763"/>
        <dbReference type="EC" id="2.5.1.10"/>
    </reaction>
    <physiologicalReaction direction="left-to-right" evidence="3">
        <dbReference type="Rhea" id="RHEA:19362"/>
    </physiologicalReaction>
</comment>
<comment type="catalytic activity">
    <reaction evidence="3">
        <text>isopentenyl diphosphate + (2E,6E)-farnesyl diphosphate = (2E,6E,10E)-geranylgeranyl diphosphate + diphosphate</text>
        <dbReference type="Rhea" id="RHEA:17653"/>
        <dbReference type="ChEBI" id="CHEBI:33019"/>
        <dbReference type="ChEBI" id="CHEBI:58756"/>
        <dbReference type="ChEBI" id="CHEBI:128769"/>
        <dbReference type="ChEBI" id="CHEBI:175763"/>
        <dbReference type="EC" id="2.5.1.29"/>
    </reaction>
    <physiologicalReaction direction="left-to-right" evidence="3">
        <dbReference type="Rhea" id="RHEA:17654"/>
    </physiologicalReaction>
</comment>
<comment type="cofactor">
    <cofactor evidence="1">
        <name>Mg(2+)</name>
        <dbReference type="ChEBI" id="CHEBI:18420"/>
    </cofactor>
    <text evidence="1">Binds 2 Mg(2+) ions per subunit.</text>
</comment>
<comment type="similarity">
    <text evidence="5">Belongs to the FPP/GGPP synthase family.</text>
</comment>
<proteinExistence type="evidence at protein level"/>
<accession>A0A858E6N7</accession>
<gene>
    <name evidence="4" type="primary">GGDPS</name>
</gene>
<name>GGDPS_MELLI</name>